<feature type="initiator methionine" description="Removed" evidence="4">
    <location>
        <position position="1"/>
    </location>
</feature>
<feature type="chain" id="PRO_0000383477" description="Prokaryotic ubiquitin-like protein Pup">
    <location>
        <begin position="2"/>
        <end position="64"/>
    </location>
</feature>
<feature type="region of interest" description="Disordered" evidence="3">
    <location>
        <begin position="1"/>
        <end position="42"/>
    </location>
</feature>
<feature type="region of interest" description="ARC ATPase binding" evidence="1">
    <location>
        <begin position="21"/>
        <end position="58"/>
    </location>
</feature>
<feature type="coiled-coil region" evidence="2">
    <location>
        <begin position="23"/>
        <end position="52"/>
    </location>
</feature>
<feature type="modified residue" description="Deamidated glutamine" evidence="4">
    <location>
        <position position="64"/>
    </location>
</feature>
<feature type="cross-link" description="Isoglutamyl lysine isopeptide (Gln-Lys) (interchain with K-? in acceptor proteins)">
    <location>
        <position position="64"/>
    </location>
</feature>
<feature type="mutagenesis site" description="Abrogates pupylation of substrate proteins." evidence="4">
    <location>
        <begin position="62"/>
        <end position="63"/>
    </location>
</feature>
<feature type="mutagenesis site" description="Abrogates pupylation of substrate proteins." evidence="4">
    <location>
        <position position="64"/>
    </location>
</feature>
<sequence length="64" mass="6954">MAQEQTKRGGGGGEDDDLPGASAAGQERREKLTEETDDLLDEIDDVLEENAEDFVRAYVQKGGQ</sequence>
<proteinExistence type="evidence at protein level"/>
<name>PUP_MYCS2</name>
<gene>
    <name type="primary">pup</name>
    <name type="synonym">prcS</name>
    <name type="ordered locus">MSMEG_3896</name>
    <name type="ordered locus">MSMEI_3806</name>
</gene>
<reference key="1">
    <citation type="journal article" date="1997" name="Mol. Microbiol.">
        <title>Inactivation of the 20S proteasome in Mycobacterium smegmatis.</title>
        <authorList>
            <person name="Knipfer N."/>
            <person name="Shrader T.E."/>
        </authorList>
    </citation>
    <scope>NUCLEOTIDE SEQUENCE [GENOMIC DNA]</scope>
</reference>
<reference key="2">
    <citation type="submission" date="2006-10" db="EMBL/GenBank/DDBJ databases">
        <authorList>
            <person name="Fleischmann R.D."/>
            <person name="Dodson R.J."/>
            <person name="Haft D.H."/>
            <person name="Merkel J.S."/>
            <person name="Nelson W.C."/>
            <person name="Fraser C.M."/>
        </authorList>
    </citation>
    <scope>NUCLEOTIDE SEQUENCE [LARGE SCALE GENOMIC DNA]</scope>
    <source>
        <strain>ATCC 700084 / mc(2)155</strain>
    </source>
</reference>
<reference key="3">
    <citation type="journal article" date="2007" name="Genome Biol.">
        <title>Interrupted coding sequences in Mycobacterium smegmatis: authentic mutations or sequencing errors?</title>
        <authorList>
            <person name="Deshayes C."/>
            <person name="Perrodou E."/>
            <person name="Gallien S."/>
            <person name="Euphrasie D."/>
            <person name="Schaeffer C."/>
            <person name="Van-Dorsselaer A."/>
            <person name="Poch O."/>
            <person name="Lecompte O."/>
            <person name="Reyrat J.-M."/>
        </authorList>
    </citation>
    <scope>NUCLEOTIDE SEQUENCE [LARGE SCALE GENOMIC DNA]</scope>
    <source>
        <strain>ATCC 700084 / mc(2)155</strain>
    </source>
</reference>
<reference key="4">
    <citation type="journal article" date="2009" name="Genome Res.">
        <title>Ortho-proteogenomics: multiple proteomes investigation through orthology and a new MS-based protocol.</title>
        <authorList>
            <person name="Gallien S."/>
            <person name="Perrodou E."/>
            <person name="Carapito C."/>
            <person name="Deshayes C."/>
            <person name="Reyrat J.-M."/>
            <person name="Van Dorsselaer A."/>
            <person name="Poch O."/>
            <person name="Schaeffer C."/>
            <person name="Lecompte O."/>
        </authorList>
    </citation>
    <scope>NUCLEOTIDE SEQUENCE [LARGE SCALE GENOMIC DNA]</scope>
    <source>
        <strain>ATCC 700084 / mc(2)155</strain>
    </source>
</reference>
<reference key="5">
    <citation type="journal article" date="2009" name="J. Biol. Chem.">
        <title>Proteasomal protein degradation in mycobacteria is dependent upon a prokaryotic ubiquitin-like protein.</title>
        <authorList>
            <person name="Burns K.E."/>
            <person name="Liu W.-T."/>
            <person name="Boshoff H.I.M."/>
            <person name="Dorrestein P.C."/>
            <person name="Barry C.E. III"/>
        </authorList>
    </citation>
    <scope>FUNCTION</scope>
    <scope>ROLE IN THE PROTEASOME DEGRADATION PATHWAY</scope>
    <scope>PROTEIN SUBSTRATES</scope>
    <scope>CROSS-LINK SITE TO PROTEASOME SUBSTRATES</scope>
    <scope>DEAMIDATION AT GLN-64</scope>
    <scope>CLEAVAGE OF INITIATOR METHIONINE</scope>
    <scope>MUTAGENESIS OF 62-GLY-GLY-63 AND GLN-64</scope>
    <scope>IDENTIFICATION BY MASS SPECTROMETRY</scope>
</reference>
<keyword id="KW-0175">Coiled coil</keyword>
<keyword id="KW-1017">Isopeptide bond</keyword>
<keyword id="KW-1185">Reference proteome</keyword>
<keyword id="KW-0833">Ubl conjugation pathway</keyword>
<protein>
    <recommendedName>
        <fullName>Prokaryotic ubiquitin-like protein Pup</fullName>
    </recommendedName>
    <alternativeName>
        <fullName>Bacterial ubiquitin-like modifier</fullName>
    </alternativeName>
</protein>
<organism>
    <name type="scientific">Mycolicibacterium smegmatis (strain ATCC 700084 / mc(2)155)</name>
    <name type="common">Mycobacterium smegmatis</name>
    <dbReference type="NCBI Taxonomy" id="246196"/>
    <lineage>
        <taxon>Bacteria</taxon>
        <taxon>Bacillati</taxon>
        <taxon>Actinomycetota</taxon>
        <taxon>Actinomycetes</taxon>
        <taxon>Mycobacteriales</taxon>
        <taxon>Mycobacteriaceae</taxon>
        <taxon>Mycolicibacterium</taxon>
    </lineage>
</organism>
<evidence type="ECO:0000250" key="1"/>
<evidence type="ECO:0000255" key="2"/>
<evidence type="ECO:0000256" key="3">
    <source>
        <dbReference type="SAM" id="MobiDB-lite"/>
    </source>
</evidence>
<evidence type="ECO:0000269" key="4">
    <source>
    </source>
</evidence>
<evidence type="ECO:0000305" key="5"/>
<comment type="function">
    <text evidence="4">Protein modifier that is covalently attached to lysine residues of substrate proteins, thereby targeting them for proteasomal degradation. The tagging system is termed pupylation. Among the identified substrates are the SodA and Ino1 proteins.</text>
</comment>
<comment type="pathway">
    <text>Protein degradation; proteasomal Pup-dependent pathway.</text>
</comment>
<comment type="subunit">
    <text evidence="1">Strongly interacts with the proteasome-associated ATPase ARC through a hydrophobic interface; the interacting region of Pup lies in its C-terminal half. There is one Pup binding site per ARC hexamer ring (By similarity).</text>
</comment>
<comment type="domain">
    <text evidence="1">The N-terminal unstructured half of Pup provides a signal required to initiate unfolding and degradation by the proteasome but is not needed for pupylation, while the C-terminal helical half of Pup interacts with ARC to target proteins to the proteasome.</text>
</comment>
<comment type="PTM">
    <text evidence="4">Is modified by deamidation of its C-terminal glutamine to glutamate probably by the deamidase Dop, a prerequisite to the subsequent pupylation process.</text>
</comment>
<comment type="similarity">
    <text evidence="5">Belongs to the prokaryotic ubiquitin-like protein family.</text>
</comment>
<accession>A0QZ48</accession>
<accession>I7GCE1</accession>
<accession>O30517</accession>
<dbReference type="EMBL" id="AF009645">
    <property type="protein sequence ID" value="AAC45613.1"/>
    <property type="molecule type" value="Genomic_DNA"/>
</dbReference>
<dbReference type="EMBL" id="CP000480">
    <property type="protein sequence ID" value="ABK74855.1"/>
    <property type="molecule type" value="Genomic_DNA"/>
</dbReference>
<dbReference type="EMBL" id="CP001663">
    <property type="protein sequence ID" value="AFP40264.1"/>
    <property type="molecule type" value="Genomic_DNA"/>
</dbReference>
<dbReference type="RefSeq" id="WP_003895347.1">
    <property type="nucleotide sequence ID" value="NZ_SIJM01000005.1"/>
</dbReference>
<dbReference type="RefSeq" id="YP_888186.1">
    <property type="nucleotide sequence ID" value="NC_008596.1"/>
</dbReference>
<dbReference type="SMR" id="A0QZ48"/>
<dbReference type="STRING" id="246196.MSMEG_3896"/>
<dbReference type="PaxDb" id="246196-MSMEI_3806"/>
<dbReference type="KEGG" id="msb:LJ00_19355"/>
<dbReference type="KEGG" id="msg:MSMEI_3806"/>
<dbReference type="KEGG" id="msm:MSMEG_3896"/>
<dbReference type="PATRIC" id="fig|246196.19.peg.3836"/>
<dbReference type="eggNOG" id="ENOG50333JS">
    <property type="taxonomic scope" value="Bacteria"/>
</dbReference>
<dbReference type="UniPathway" id="UPA00997"/>
<dbReference type="Proteomes" id="UP000000757">
    <property type="component" value="Chromosome"/>
</dbReference>
<dbReference type="Proteomes" id="UP000006158">
    <property type="component" value="Chromosome"/>
</dbReference>
<dbReference type="GO" id="GO:0070628">
    <property type="term" value="F:proteasome binding"/>
    <property type="evidence" value="ECO:0007669"/>
    <property type="project" value="UniProtKB-UniRule"/>
</dbReference>
<dbReference type="GO" id="GO:0031386">
    <property type="term" value="F:protein tag activity"/>
    <property type="evidence" value="ECO:0000314"/>
    <property type="project" value="UniProtKB"/>
</dbReference>
<dbReference type="GO" id="GO:0019941">
    <property type="term" value="P:modification-dependent protein catabolic process"/>
    <property type="evidence" value="ECO:0000314"/>
    <property type="project" value="UniProtKB"/>
</dbReference>
<dbReference type="GO" id="GO:0010498">
    <property type="term" value="P:proteasomal protein catabolic process"/>
    <property type="evidence" value="ECO:0000314"/>
    <property type="project" value="UniProtKB"/>
</dbReference>
<dbReference type="GO" id="GO:0070490">
    <property type="term" value="P:protein pupylation"/>
    <property type="evidence" value="ECO:0000314"/>
    <property type="project" value="UniProtKB"/>
</dbReference>
<dbReference type="HAMAP" id="MF_02106">
    <property type="entry name" value="Pup"/>
    <property type="match status" value="1"/>
</dbReference>
<dbReference type="InterPro" id="IPR008515">
    <property type="entry name" value="Ubiquitin-like_Pup"/>
</dbReference>
<dbReference type="NCBIfam" id="TIGR03687">
    <property type="entry name" value="pupylate_cterm"/>
    <property type="match status" value="1"/>
</dbReference>
<dbReference type="Pfam" id="PF05639">
    <property type="entry name" value="Pup"/>
    <property type="match status" value="1"/>
</dbReference>